<accession>A0A1P8VF93</accession>
<reference key="1">
    <citation type="submission" date="2016-05" db="EMBL/GenBank/DDBJ databases">
        <title>The biosynthetic steps of Monascus azahpilone pigments in fungi.</title>
        <authorList>
            <person name="Chen W."/>
            <person name="Chen F."/>
        </authorList>
    </citation>
    <scope>NUCLEOTIDE SEQUENCE [MRNA]</scope>
    <source>
        <strain>M7</strain>
    </source>
</reference>
<reference key="2">
    <citation type="journal article" date="1977" name="Plant Physiol.">
        <title>Pigmentation and antibacterial activity of fast neutron- and X-ray-induced strains of Monascus purpureus went.</title>
        <authorList>
            <person name="Wong H.C."/>
            <person name="Bau Y.S."/>
        </authorList>
    </citation>
    <scope>BIOTECHNOLOGY</scope>
</reference>
<reference key="3">
    <citation type="journal article" date="2005" name="Chem. Biodivers.">
        <title>Anti-tumor-initiating effects of monascin, an azaphilonoid pigment from the extract of Monascus pilosus fermented rice (red-mold rice).</title>
        <authorList>
            <person name="Akihisa T."/>
            <person name="Tokuda H."/>
            <person name="Ukiya M."/>
            <person name="Kiyota A."/>
            <person name="Yasukawa K."/>
            <person name="Sakamoto N."/>
            <person name="Kimura Y."/>
            <person name="Suzuki T."/>
            <person name="Takayasu J."/>
            <person name="Nishino H."/>
        </authorList>
    </citation>
    <scope>BIOTECHNOLOGY</scope>
</reference>
<reference key="4">
    <citation type="journal article" date="2006" name="Appl. Microbiol. Biotechnol.">
        <title>In vivo hypolipidemic effects and safety of low dosage Monascus powder in a hamster model of hyperlipidemia.</title>
        <authorList>
            <person name="Lee C.L."/>
            <person name="Tsai T.Y."/>
            <person name="Wang J.J."/>
            <person name="Pan T.M."/>
        </authorList>
    </citation>
    <scope>BIOTECHNOLOGY</scope>
</reference>
<reference key="5">
    <citation type="journal article" date="2010" name="J. Agric. Food Chem.">
        <title>Monascin and ankaflavin act as novel hypolipidemic and high-density lipoprotein cholesterol-raising agents in red mold dioscorea.</title>
        <authorList>
            <person name="Lee C.L."/>
            <person name="Kung Y.H."/>
            <person name="Wu C.L."/>
            <person name="Hsu Y.W."/>
            <person name="Pan T.M."/>
        </authorList>
    </citation>
    <scope>BIOTECHNOLOGY</scope>
</reference>
<reference key="6">
    <citation type="journal article" date="2012" name="Appl. Microbiol. Biotechnol.">
        <title>Development of Monascus fermentation technology for high hypolipidemic effect.</title>
        <authorList>
            <person name="Lee C.L."/>
            <person name="Pan T.M."/>
        </authorList>
    </citation>
    <scope>BIOTECHNOLOGY</scope>
</reference>
<reference key="7">
    <citation type="journal article" date="2016" name="Appl. Microbiol. Biotechnol.">
        <title>Identification and role analysis of an intermediate produced by a polygenic mutant of Monascus pigments cluster in Monascus ruber M7.</title>
        <authorList>
            <person name="Liu J."/>
            <person name="Zhou Y."/>
            <person name="Yi T."/>
            <person name="Zhao M."/>
            <person name="Xie N."/>
            <person name="Lei M."/>
            <person name="Liu Q."/>
            <person name="Shao Y."/>
            <person name="Chen F."/>
        </authorList>
    </citation>
    <scope>FUNCTION</scope>
    <scope>PATHWAY</scope>
</reference>
<reference key="8">
    <citation type="journal article" date="2017" name="Chem. Sci.">
        <title>Orange, red, yellow: biosynthesis of azaphilone pigments in Monascus fungi.</title>
        <authorList>
            <person name="Chen W."/>
            <person name="Chen R."/>
            <person name="Liu Q."/>
            <person name="He Y."/>
            <person name="He K."/>
            <person name="Ding X."/>
            <person name="Kang L."/>
            <person name="Guo X."/>
            <person name="Xie N."/>
            <person name="Zhou Y."/>
            <person name="Lu Y."/>
            <person name="Cox R.J."/>
            <person name="Molnar I."/>
            <person name="Li M."/>
            <person name="Shao Y."/>
            <person name="Chen F."/>
        </authorList>
    </citation>
    <scope>FUNCTION</scope>
    <scope>DISRUPTION PHENOTYPE</scope>
    <scope>CATALYTIC ACTIVITY</scope>
    <scope>PATHWAY</scope>
</reference>
<reference key="9">
    <citation type="journal article" date="2021" name="Front. Microbiol.">
        <title>An integrated approach to determine the boundaries of the azaphilone pigment biosynthetic gene cluster of Monascus ruber M7 gown on potato dextrose agar.</title>
        <authorList>
            <person name="Liu Q."/>
            <person name="Zhong S."/>
            <person name="Wang X."/>
            <person name="Gao S."/>
            <person name="Yang X."/>
            <person name="Chen F."/>
            <person name="Molnar I."/>
        </authorList>
    </citation>
    <scope>FUNCTION</scope>
    <scope>INDUCTION</scope>
</reference>
<reference key="10">
    <citation type="journal article" date="2023" name="Food Res. Intern.">
        <title>Improved natural food colorant production in the filamentous fungus Monascus ruber using CRISPR-based engineering.</title>
        <authorList>
            <person name="Ree Yoon H."/>
            <person name="Han S."/>
            <person name="Chul Shin S."/>
            <person name="Cheong Yeom S."/>
            <person name="Jin Kim H."/>
        </authorList>
    </citation>
    <scope>BIOTECHNOLOGY</scope>
</reference>
<feature type="chain" id="PRO_0000460211" description="O-acetyltransferase pigM">
    <location>
        <begin position="1"/>
        <end position="508"/>
    </location>
</feature>
<feature type="region of interest" description="Disordered" evidence="1">
    <location>
        <begin position="166"/>
        <end position="188"/>
    </location>
</feature>
<comment type="function">
    <text evidence="7 8 9">O-acetyltransferase; part of the gene cluster that mediates the biosynthesis of azaphilone pigments (MonAzPs), a complex mixture of compounds with a common azaphilone skeleton very widely used as food colorants (PubMed:26946170, PubMed:28959415, PubMed:34220766). PigM and pigO are involved in the elimination of the omega-1 alcohol with pigM acting as an O-acetyltransferase that synthesizes the O-11 acetyl intermediate whereas pigO eliminates acetic acid to yield an intermediate with a C10(11) double bond (PubMed:28959415). The first step of the pathway is performed by the nrPKS pigA that forms the hexaketide precursor from successive condensations of five malonyl-CoA units, with a simple acetyl-CoA starter unit. The role of esterase pigG is not clear, but it may play at most a supplementary role in the formation of the benzaldehyde produced by the pigA nrPKS. This very reactive benzaldehyde is intercepted by the pigC ketoreductase that to provide the first stable enzyme-free MonAzPs intermediate, 6-(4-hydroxy-2-oxopentyl)-3-methyl-2,4-dioxocyclohexane carbaldehyde, also known as M7PKS-1. The FAD-dependent monooxygenase pigN hydroxylates M7PKS-1 at C-4, which triggers the formation of the pyran ring. PigJ, pigK and pigD are involved in the acetylation of the pyran ring. PigJ and pigK form the two subunits of a dedicated fungal FAS that produces the side chain fatty acyl moiety of MonAzPs and pigD transfers the fatty acyl chain to the C-4 alcohol. PigM and pigO are involved in the elimination of the omega-1 alcohol. PigM acts as an O-acetyltransferase that synthesizes the putative O-11 acetyl intermediate whereas pigO eliminates acetic acid to yield an intermediate with a C10(11) double bond. The dehydration of the C-11 alcohol followed by the reduction of the C6(7) double bond by the NAD(P)H-dependent oxidoreductase pigE increases the electrophilicity of the C-5 ketone of the resulting acyl benzopyran. This in turn sets up the C-5 ketone for an intramolecular Knoevenagel aldol condensation with the C-20 enol of the side chain. This condensation affords the characteristic linear tricyclic carbon skeletons of the yellow pigments that serve as the common precursors for the classical yellow pigments monascin and ankaflavin, orange pigments rubopunctatin and monascorubrin, and red pigments ribropunctamine and monascorubramine. The FAD-dependent oxidoreductase pigF is especially invoved in the biosynthesis of orange and red pigments via desaturation of C6(7) (PubMed:28959415).</text>
</comment>
<comment type="pathway">
    <text evidence="7 8">Secondary metabolite biosynthesis.</text>
</comment>
<comment type="induction">
    <text evidence="9">Expression is positively regulated by the azaphilone pigments (MonAzPs) gene cluster-specific transcription regulator pigB.</text>
</comment>
<comment type="disruption phenotype">
    <text evidence="8">Produces the angular tricyclic shunt intermediates monasfluol A and monasfluol B that retain the omega-1 alcohol.</text>
</comment>
<comment type="biotechnology">
    <text evidence="2 3 4 5 6 10">As colorants, MonAzPs are widely used in various food products for centuries (PubMed:37087240). Moreover, MonAzPs also possess wide-ranging biological activities such as antibacterial activity, preventing hypertension, lowering cholesterol levels, causing hypolipidemic effects, and displaying antiobesity and antitumor activities (PubMed:16283302, PubMed:16660141, PubMed:17191930, PubMed:20666456, PubMed:22562164).</text>
</comment>
<protein>
    <recommendedName>
        <fullName evidence="11">O-acetyltransferase pigM</fullName>
        <ecNumber evidence="8">2.3.1.-</ecNumber>
    </recommendedName>
    <alternativeName>
        <fullName evidence="11">Azaphilone pigments biosynthesis cluster protein M</fullName>
    </alternativeName>
</protein>
<evidence type="ECO:0000256" key="1">
    <source>
        <dbReference type="SAM" id="MobiDB-lite"/>
    </source>
</evidence>
<evidence type="ECO:0000269" key="2">
    <source>
    </source>
</evidence>
<evidence type="ECO:0000269" key="3">
    <source>
    </source>
</evidence>
<evidence type="ECO:0000269" key="4">
    <source>
    </source>
</evidence>
<evidence type="ECO:0000269" key="5">
    <source>
    </source>
</evidence>
<evidence type="ECO:0000269" key="6">
    <source>
    </source>
</evidence>
<evidence type="ECO:0000269" key="7">
    <source>
    </source>
</evidence>
<evidence type="ECO:0000269" key="8">
    <source>
    </source>
</evidence>
<evidence type="ECO:0000269" key="9">
    <source>
    </source>
</evidence>
<evidence type="ECO:0000269" key="10">
    <source>
    </source>
</evidence>
<evidence type="ECO:0000303" key="11">
    <source>
    </source>
</evidence>
<name>PIGM_MONRU</name>
<keyword id="KW-0012">Acyltransferase</keyword>
<keyword id="KW-0608">Pigment</keyword>
<keyword id="KW-0808">Transferase</keyword>
<gene>
    <name evidence="11" type="primary">pigM</name>
</gene>
<dbReference type="EC" id="2.3.1.-" evidence="8"/>
<dbReference type="EMBL" id="KX278310">
    <property type="protein sequence ID" value="APZ73945.1"/>
    <property type="molecule type" value="mRNA"/>
</dbReference>
<dbReference type="SMR" id="A0A1P8VF93"/>
<dbReference type="GO" id="GO:0016746">
    <property type="term" value="F:acyltransferase activity"/>
    <property type="evidence" value="ECO:0007669"/>
    <property type="project" value="UniProtKB-KW"/>
</dbReference>
<dbReference type="GO" id="GO:0031409">
    <property type="term" value="F:pigment binding"/>
    <property type="evidence" value="ECO:0007669"/>
    <property type="project" value="UniProtKB-KW"/>
</dbReference>
<dbReference type="Gene3D" id="3.30.559.10">
    <property type="entry name" value="Chloramphenicol acetyltransferase-like domain"/>
    <property type="match status" value="1"/>
</dbReference>
<dbReference type="Gene3D" id="3.30.559.30">
    <property type="entry name" value="Nonribosomal peptide synthetase, condensation domain"/>
    <property type="match status" value="1"/>
</dbReference>
<dbReference type="InterPro" id="IPR023213">
    <property type="entry name" value="CAT-like_dom_sf"/>
</dbReference>
<dbReference type="InterPro" id="IPR031641">
    <property type="entry name" value="PapA_C"/>
</dbReference>
<dbReference type="PANTHER" id="PTHR42034">
    <property type="entry name" value="CHROMOSOME 7, WHOLE GENOME SHOTGUN SEQUENCE-RELATED"/>
    <property type="match status" value="1"/>
</dbReference>
<dbReference type="PANTHER" id="PTHR42034:SF1">
    <property type="entry name" value="CONDENSATION DOMAIN-CONTAINING PROTEIN"/>
    <property type="match status" value="1"/>
</dbReference>
<dbReference type="Pfam" id="PF16911">
    <property type="entry name" value="PapA_C"/>
    <property type="match status" value="1"/>
</dbReference>
<dbReference type="SUPFAM" id="SSF52777">
    <property type="entry name" value="CoA-dependent acyltransferases"/>
    <property type="match status" value="1"/>
</dbReference>
<sequence length="508" mass="56559">MTWRQTEPGIFVKDFDGAEKVYYKIFTSFKPLNREHWGIYAICTVNFGPSLNTDRVAILRSAWKALRITFPGLSLVPINVAKLYKVSDAQSVEEWAGQTFFVDAEKTPEEVIASAKPRDLPSLYYLPASSSVVFLSSHWRIDALGTCMLLDRFFSILEQPSLVEATPAPDERGKISPSLEDAAGSPRTSTEEMEKFAGEYIANFHKKAVQTSGFPFKGGPNTLPSNPAQEAVMFSPSSTKSLLAACKDRRISVTAAIHAALAETVFVLGMSESQAADFTTVMAVNLRPYLQPPYNSRDHACQTYVGSITPQVLRSKNFLERTASLMESYQGWYDGKLIKALRPIFKYHADALFAQRAPPPNPPSGVTLNSLGVIEKYFRSDYENGLKVERFHFGVTMMTRQTMLYAWTFRGQLTLSLNFNEAYYDGDVAKKILLHIKRVLEKELSVELDPVVEILPAKQMEHELSTKHRVVYLMIPRKVDDADNGFEGAILPGSAKPAVAGGEDANPL</sequence>
<organism>
    <name type="scientific">Monascus ruber</name>
    <name type="common">Mold</name>
    <dbReference type="NCBI Taxonomy" id="89489"/>
    <lineage>
        <taxon>Eukaryota</taxon>
        <taxon>Fungi</taxon>
        <taxon>Dikarya</taxon>
        <taxon>Ascomycota</taxon>
        <taxon>Pezizomycotina</taxon>
        <taxon>Eurotiomycetes</taxon>
        <taxon>Eurotiomycetidae</taxon>
        <taxon>Eurotiales</taxon>
        <taxon>Aspergillaceae</taxon>
        <taxon>Monascus</taxon>
    </lineage>
</organism>
<proteinExistence type="evidence at protein level"/>